<gene>
    <name type="primary">GCNT3</name>
</gene>
<sequence>MKMTGWKKKLCRGHHLWALGCYMLLAVVALRLSLRLKCDVDSLDLESRDFQSQRCRDVLYKNLKLPAKRSINCSGITRGDQEAVVQALLDNLEVKKKRLPFTDTYYLNITRDCEQFKAQRKFIQFPLSKEELDFPIAYSMVVHEKIENFERLLRAVYAPQNIYCVHVDVKSPETFKEAVKAIISCFPNVFMASKLVPVVYASWSRVQADLNCMEDLLQSSVPWKYLLNTCGTDFPIKTNAEMVLALKMLNGKNSMESEIPSEYKKNRWKYRYEVTDRLYLTSKMKDPPPDNLPMFTGNAYFVASRAFVQHVLENPKSQRLIEWVKDTYSPDEHLWATLQRAPWMPGSVPYHPKYHISDMTAIARLVKWQGHEGDVSMGAPYAPCSGIHQRAICIYGAGDLHWILQNHHLLANKFDPRVDDNVLQCLEEYLRHKAIYGTEL</sequence>
<organism>
    <name type="scientific">Bos taurus</name>
    <name type="common">Bovine</name>
    <dbReference type="NCBI Taxonomy" id="9913"/>
    <lineage>
        <taxon>Eukaryota</taxon>
        <taxon>Metazoa</taxon>
        <taxon>Chordata</taxon>
        <taxon>Craniata</taxon>
        <taxon>Vertebrata</taxon>
        <taxon>Euteleostomi</taxon>
        <taxon>Mammalia</taxon>
        <taxon>Eutheria</taxon>
        <taxon>Laurasiatheria</taxon>
        <taxon>Artiodactyla</taxon>
        <taxon>Ruminantia</taxon>
        <taxon>Pecora</taxon>
        <taxon>Bovidae</taxon>
        <taxon>Bovinae</taxon>
        <taxon>Bos</taxon>
    </lineage>
</organism>
<dbReference type="EC" id="2.4.1.102" evidence="2"/>
<dbReference type="EC" id="2.4.1.148" evidence="2"/>
<dbReference type="EC" id="2.4.1.150" evidence="2"/>
<dbReference type="EMBL" id="AF465338">
    <property type="protein sequence ID" value="AAO22165.1"/>
    <property type="molecule type" value="Genomic_DNA"/>
</dbReference>
<dbReference type="EMBL" id="AY283763">
    <property type="protein sequence ID" value="AAP76324.1"/>
    <property type="molecule type" value="mRNA"/>
</dbReference>
<dbReference type="EMBL" id="AY283764">
    <property type="protein sequence ID" value="AAP76325.1"/>
    <property type="molecule type" value="mRNA"/>
</dbReference>
<dbReference type="EMBL" id="AY283765">
    <property type="protein sequence ID" value="AAP76326.1"/>
    <property type="molecule type" value="mRNA"/>
</dbReference>
<dbReference type="EMBL" id="AY283766">
    <property type="protein sequence ID" value="AAP76327.1"/>
    <property type="molecule type" value="mRNA"/>
</dbReference>
<dbReference type="EMBL" id="AY283767">
    <property type="protein sequence ID" value="AAP76328.1"/>
    <property type="molecule type" value="Genomic_DNA"/>
</dbReference>
<dbReference type="RefSeq" id="NP_991378.1">
    <property type="nucleotide sequence ID" value="NM_205809.1"/>
</dbReference>
<dbReference type="RefSeq" id="XP_005211713.1">
    <property type="nucleotide sequence ID" value="XM_005211656.5"/>
</dbReference>
<dbReference type="RefSeq" id="XP_010807543.1">
    <property type="nucleotide sequence ID" value="XM_010809241.2"/>
</dbReference>
<dbReference type="SMR" id="Q7YQE1"/>
<dbReference type="FunCoup" id="Q7YQE1">
    <property type="interactions" value="24"/>
</dbReference>
<dbReference type="STRING" id="9913.ENSBTAP00000012427"/>
<dbReference type="CAZy" id="GT14">
    <property type="family name" value="Glycosyltransferase Family 14"/>
</dbReference>
<dbReference type="GlyCosmos" id="Q7YQE1">
    <property type="glycosylation" value="2 sites, No reported glycans"/>
</dbReference>
<dbReference type="GlyGen" id="Q7YQE1">
    <property type="glycosylation" value="2 sites"/>
</dbReference>
<dbReference type="PaxDb" id="9913-ENSBTAP00000012427"/>
<dbReference type="Ensembl" id="ENSBTAT00000012427.6">
    <property type="protein sequence ID" value="ENSBTAP00000012427.4"/>
    <property type="gene ID" value="ENSBTAG00000009443.6"/>
</dbReference>
<dbReference type="Ensembl" id="ENSBTAT00000079217.2">
    <property type="protein sequence ID" value="ENSBTAP00000064426.1"/>
    <property type="gene ID" value="ENSBTAG00000009443.6"/>
</dbReference>
<dbReference type="Ensembl" id="ENSBTAT00000092039.1">
    <property type="protein sequence ID" value="ENSBTAP00000095039.1"/>
    <property type="gene ID" value="ENSBTAG00000009443.6"/>
</dbReference>
<dbReference type="Ensembl" id="ENSBTAT00000103589.1">
    <property type="protein sequence ID" value="ENSBTAP00000103229.1"/>
    <property type="gene ID" value="ENSBTAG00000009443.6"/>
</dbReference>
<dbReference type="Ensembl" id="ENSBTAT00000119233.1">
    <property type="protein sequence ID" value="ENSBTAP00000103869.1"/>
    <property type="gene ID" value="ENSBTAG00000009443.6"/>
</dbReference>
<dbReference type="Ensembl" id="ENSBTAT00000128578.1">
    <property type="protein sequence ID" value="ENSBTAP00000087062.1"/>
    <property type="gene ID" value="ENSBTAG00000009443.6"/>
</dbReference>
<dbReference type="Ensembl" id="ENSBTAT00000128643.1">
    <property type="protein sequence ID" value="ENSBTAP00000088102.1"/>
    <property type="gene ID" value="ENSBTAG00000009443.6"/>
</dbReference>
<dbReference type="Ensembl" id="ENSBTAT00000131933.1">
    <property type="protein sequence ID" value="ENSBTAP00000082082.1"/>
    <property type="gene ID" value="ENSBTAG00000009443.6"/>
</dbReference>
<dbReference type="Ensembl" id="ENSBTAT00000133056.1">
    <property type="protein sequence ID" value="ENSBTAP00000087286.1"/>
    <property type="gene ID" value="ENSBTAG00000009443.6"/>
</dbReference>
<dbReference type="Ensembl" id="ENSBTAT00000133928.1">
    <property type="protein sequence ID" value="ENSBTAP00000102196.1"/>
    <property type="gene ID" value="ENSBTAG00000009443.6"/>
</dbReference>
<dbReference type="GeneID" id="404167"/>
<dbReference type="KEGG" id="bta:404167"/>
<dbReference type="CTD" id="9245"/>
<dbReference type="VEuPathDB" id="HostDB:ENSBTAG00000009443"/>
<dbReference type="VGNC" id="VGNC:112626">
    <property type="gene designation" value="GCNT3"/>
</dbReference>
<dbReference type="eggNOG" id="KOG0799">
    <property type="taxonomic scope" value="Eukaryota"/>
</dbReference>
<dbReference type="GeneTree" id="ENSGT00940000159331"/>
<dbReference type="HOGENOM" id="CLU_032341_1_2_1"/>
<dbReference type="InParanoid" id="Q7YQE1"/>
<dbReference type="OMA" id="NMTRDCE"/>
<dbReference type="OrthoDB" id="2019572at2759"/>
<dbReference type="TreeFam" id="TF315534"/>
<dbReference type="Reactome" id="R-BTA-913709">
    <property type="pathway name" value="O-linked glycosylation of mucins"/>
</dbReference>
<dbReference type="UniPathway" id="UPA00378"/>
<dbReference type="Proteomes" id="UP000009136">
    <property type="component" value="Chromosome 10"/>
</dbReference>
<dbReference type="Bgee" id="ENSBTAG00000009443">
    <property type="expression patterns" value="Expressed in abomasum and 93 other cell types or tissues"/>
</dbReference>
<dbReference type="GO" id="GO:0000139">
    <property type="term" value="C:Golgi membrane"/>
    <property type="evidence" value="ECO:0007669"/>
    <property type="project" value="UniProtKB-SubCell"/>
</dbReference>
<dbReference type="GO" id="GO:0047225">
    <property type="term" value="F:acetylgalactosaminyl-O-glycosyl-glycoprotein beta-1,6-N-acetylglucosaminyltransferase activity"/>
    <property type="evidence" value="ECO:0007669"/>
    <property type="project" value="UniProtKB-EC"/>
</dbReference>
<dbReference type="GO" id="GO:0008375">
    <property type="term" value="F:acetylglucosaminyltransferase activity"/>
    <property type="evidence" value="ECO:0000318"/>
    <property type="project" value="GO_Central"/>
</dbReference>
<dbReference type="GO" id="GO:0003829">
    <property type="term" value="F:beta-1,3-galactosyl-O-glycosyl-glycoprotein beta-1,6-N-acetylglucosaminyltransferase activity"/>
    <property type="evidence" value="ECO:0007669"/>
    <property type="project" value="UniProtKB-EC"/>
</dbReference>
<dbReference type="GO" id="GO:0008109">
    <property type="term" value="F:N-acetyllactosaminide beta-1,6-N-acetylglucosaminyltransferase activity"/>
    <property type="evidence" value="ECO:0007669"/>
    <property type="project" value="UniProtKB-EC"/>
</dbReference>
<dbReference type="GO" id="GO:0050892">
    <property type="term" value="P:intestinal absorption"/>
    <property type="evidence" value="ECO:0007669"/>
    <property type="project" value="Ensembl"/>
</dbReference>
<dbReference type="GO" id="GO:0060993">
    <property type="term" value="P:kidney morphogenesis"/>
    <property type="evidence" value="ECO:0007669"/>
    <property type="project" value="Ensembl"/>
</dbReference>
<dbReference type="GO" id="GO:0006486">
    <property type="term" value="P:protein glycosylation"/>
    <property type="evidence" value="ECO:0007669"/>
    <property type="project" value="UniProtKB-UniPathway"/>
</dbReference>
<dbReference type="GO" id="GO:0048729">
    <property type="term" value="P:tissue morphogenesis"/>
    <property type="evidence" value="ECO:0007669"/>
    <property type="project" value="Ensembl"/>
</dbReference>
<dbReference type="InterPro" id="IPR003406">
    <property type="entry name" value="Glyco_trans_14"/>
</dbReference>
<dbReference type="PANTHER" id="PTHR19297:SF81">
    <property type="entry name" value="BETA-1,3-GALACTOSYL-O-GLYCOSYL-GLYCOPROTEIN BETA-1,6-N-ACETYLGLUCOSAMINYLTRANSFERASE 3"/>
    <property type="match status" value="1"/>
</dbReference>
<dbReference type="PANTHER" id="PTHR19297">
    <property type="entry name" value="GLYCOSYLTRANSFERASE 14 FAMILY MEMBER"/>
    <property type="match status" value="1"/>
</dbReference>
<dbReference type="Pfam" id="PF02485">
    <property type="entry name" value="Branch"/>
    <property type="match status" value="1"/>
</dbReference>
<evidence type="ECO:0000250" key="1"/>
<evidence type="ECO:0000250" key="2">
    <source>
        <dbReference type="UniProtKB" id="O95395"/>
    </source>
</evidence>
<evidence type="ECO:0000255" key="3"/>
<evidence type="ECO:0000269" key="4">
    <source>
    </source>
</evidence>
<evidence type="ECO:0000305" key="5"/>
<evidence type="ECO:0000305" key="6">
    <source>
    </source>
</evidence>
<comment type="function">
    <text evidence="2">Glycosyltransferase that can synthesize all known mucin beta 6 N-acetylglucosaminides. Mediates core 2 and core 4 O-glycan branching, 2 important steps in mucin-type biosynthesis. Also has I-branching enzyme activity by converting linear into branched poly-N-acetyllactosaminoglycans, leading to introduce the blood group I antigen during embryonic development.</text>
</comment>
<comment type="catalytic activity">
    <reaction evidence="2">
        <text>a 3-O-[beta-D-galactosyl-(1-&gt;3)-N-acetyl-alpha-D-galactosaminyl]-L-seryl-[protein] + UDP-N-acetyl-alpha-D-glucosamine = 3-O-{beta-D-galactosyl-(1-&gt;3)-[N-acetyl-beta-D-glucosaminyl-(1-&gt;6)]-N-acetyl-alpha-D-galactosaminyl}-L-seryl-[protein] + UDP + H(+)</text>
        <dbReference type="Rhea" id="RHEA:56212"/>
        <dbReference type="Rhea" id="RHEA-COMP:13922"/>
        <dbReference type="Rhea" id="RHEA-COMP:14419"/>
        <dbReference type="ChEBI" id="CHEBI:15378"/>
        <dbReference type="ChEBI" id="CHEBI:57705"/>
        <dbReference type="ChEBI" id="CHEBI:58223"/>
        <dbReference type="ChEBI" id="CHEBI:137949"/>
        <dbReference type="ChEBI" id="CHEBI:139605"/>
        <dbReference type="EC" id="2.4.1.102"/>
    </reaction>
</comment>
<comment type="catalytic activity">
    <reaction evidence="2">
        <text>a 3-O-[beta-D-galactosyl-(1-&gt;3)-N-acetyl-alpha-D-galactosaminyl]-L-threonyl-[protein] + UDP-N-acetyl-alpha-D-glucosamine = a 3-O-{beta-D-galactosyl-(1-&gt;3)-[N-acetyl-beta-D-glucosaminyl-(1-&gt;6)]-N-acetyl-alpha-D-galactosaminyl}-L-threonyl-[protein] + UDP + H(+)</text>
        <dbReference type="Rhea" id="RHEA:56216"/>
        <dbReference type="Rhea" id="RHEA-COMP:13923"/>
        <dbReference type="Rhea" id="RHEA-COMP:14420"/>
        <dbReference type="ChEBI" id="CHEBI:15378"/>
        <dbReference type="ChEBI" id="CHEBI:57705"/>
        <dbReference type="ChEBI" id="CHEBI:58223"/>
        <dbReference type="ChEBI" id="CHEBI:137950"/>
        <dbReference type="ChEBI" id="CHEBI:139607"/>
        <dbReference type="EC" id="2.4.1.102"/>
    </reaction>
</comment>
<comment type="catalytic activity">
    <reaction evidence="2">
        <text>a beta-D-Gal-(1-&gt;4)-beta-D-GlcNAc-(1-&gt;3)-beta-D-Gal-(1-&gt;4)-beta-D-GlcNAc derivative + UDP-N-acetyl-alpha-D-glucosamine = a beta-D-Gal-(1-&gt;4)-beta-D-GlcNAc-(1-&gt;3)-[beta-D-GlcNAc-(1-&gt;6)]-beta-D-Gal-(1-&gt;4)-N-acetyl-beta-D-glucosaminyl derivative + UDP + H(+)</text>
        <dbReference type="Rhea" id="RHEA:54820"/>
        <dbReference type="ChEBI" id="CHEBI:15378"/>
        <dbReference type="ChEBI" id="CHEBI:57705"/>
        <dbReference type="ChEBI" id="CHEBI:58223"/>
        <dbReference type="ChEBI" id="CHEBI:138371"/>
        <dbReference type="ChEBI" id="CHEBI:138372"/>
        <dbReference type="EC" id="2.4.1.150"/>
    </reaction>
</comment>
<comment type="catalytic activity">
    <reaction evidence="2">
        <text>3-O-[N-acetyl-beta-D-glucosaminyl-(1-&gt;3)-N-acetyl-alpha-D-galactosaminyl]-L-seryl-[protein] + UDP-N-acetyl-alpha-D-glucosamine = 3-O-[N-acetyl-beta-D-glucosaminyl-(1-&gt;3)-[N-acetyl-beta-D-glucosaminyl-(1-&gt;6)]-N-acetyl-alpha-D-galactosaminyl]-L-seryl-[protein] + UDP + H(+)</text>
        <dbReference type="Rhea" id="RHEA:56188"/>
        <dbReference type="Rhea" id="RHEA-COMP:11691"/>
        <dbReference type="Rhea" id="RHEA-COMP:14412"/>
        <dbReference type="ChEBI" id="CHEBI:15378"/>
        <dbReference type="ChEBI" id="CHEBI:57705"/>
        <dbReference type="ChEBI" id="CHEBI:58223"/>
        <dbReference type="ChEBI" id="CHEBI:87079"/>
        <dbReference type="ChEBI" id="CHEBI:139581"/>
        <dbReference type="EC" id="2.4.1.148"/>
    </reaction>
</comment>
<comment type="catalytic activity">
    <reaction evidence="2">
        <text>a 3-O-[N-acetyl-beta-D-glucosaminyl-(1-&gt;3)-N-acetyl-alpha-D-galactosaminyl]-L-threonyl-[protein] + UDP-N-acetyl-alpha-D-glucosamine = 3-O-[N-acetyl-beta-D-glucosaminyl-(1-&gt;3)-[N-acetyl-beta-D-glucosaminyl-(1-&gt;6)]-N-acetyl-alpha-D-galactosaminyl]-L-threonyl-[protein] + UDP + H(+)</text>
        <dbReference type="Rhea" id="RHEA:56192"/>
        <dbReference type="Rhea" id="RHEA-COMP:11692"/>
        <dbReference type="Rhea" id="RHEA-COMP:14413"/>
        <dbReference type="ChEBI" id="CHEBI:15378"/>
        <dbReference type="ChEBI" id="CHEBI:57705"/>
        <dbReference type="ChEBI" id="CHEBI:58223"/>
        <dbReference type="ChEBI" id="CHEBI:87080"/>
        <dbReference type="ChEBI" id="CHEBI:139580"/>
        <dbReference type="EC" id="2.4.1.148"/>
    </reaction>
</comment>
<comment type="pathway">
    <text>Protein modification; protein glycosylation.</text>
</comment>
<comment type="subcellular location">
    <subcellularLocation>
        <location evidence="1">Golgi apparatus membrane</location>
        <topology evidence="1">Single-pass type II membrane protein</topology>
    </subcellularLocation>
</comment>
<comment type="tissue specificity">
    <text>Primarily expressed in mucus-secreting tissues.</text>
</comment>
<comment type="PTM">
    <text evidence="6">N-glycosylated.</text>
</comment>
<comment type="similarity">
    <text evidence="5">Belongs to the glycosyltransferase 14 family.</text>
</comment>
<protein>
    <recommendedName>
        <fullName>Beta-1,3-galactosyl-O-glycosyl-glycoprotein beta-1,6-N-acetylglucosaminyltransferase 3</fullName>
        <ecNumber evidence="2">2.4.1.102</ecNumber>
        <ecNumber evidence="2">2.4.1.148</ecNumber>
        <ecNumber evidence="2">2.4.1.150</ecNumber>
    </recommendedName>
    <alternativeName>
        <fullName>C2GnT-mucin type</fullName>
    </alternativeName>
    <alternativeName>
        <fullName>Mucus-type core 2 beta-1,6-N-acetylglucosaminyltransferase</fullName>
    </alternativeName>
    <alternativeName>
        <fullName>bC2GnT-M</fullName>
        <shortName>C2GnT-M</shortName>
    </alternativeName>
</protein>
<accession>Q7YQE1</accession>
<accession>Q7YQF8</accession>
<accession>Q866Z3</accession>
<name>GCNT3_BOVIN</name>
<keyword id="KW-0903">Direct protein sequencing</keyword>
<keyword id="KW-1015">Disulfide bond</keyword>
<keyword id="KW-0325">Glycoprotein</keyword>
<keyword id="KW-0328">Glycosyltransferase</keyword>
<keyword id="KW-0333">Golgi apparatus</keyword>
<keyword id="KW-0472">Membrane</keyword>
<keyword id="KW-1185">Reference proteome</keyword>
<keyword id="KW-0735">Signal-anchor</keyword>
<keyword id="KW-0808">Transferase</keyword>
<keyword id="KW-0812">Transmembrane</keyword>
<keyword id="KW-1133">Transmembrane helix</keyword>
<feature type="chain" id="PRO_0000288543" description="Beta-1,3-galactosyl-O-glycosyl-glycoprotein beta-1,6-N-acetylglucosaminyltransferase 3">
    <location>
        <begin position="1"/>
        <end position="440"/>
    </location>
</feature>
<feature type="topological domain" description="Cytoplasmic" evidence="3">
    <location>
        <begin position="1"/>
        <end position="12"/>
    </location>
</feature>
<feature type="transmembrane region" description="Helical; Signal-anchor for type II membrane protein" evidence="3">
    <location>
        <begin position="13"/>
        <end position="30"/>
    </location>
</feature>
<feature type="topological domain" description="Lumenal" evidence="3">
    <location>
        <begin position="31"/>
        <end position="440"/>
    </location>
</feature>
<feature type="glycosylation site" description="N-linked (GlcNAc...) asparagine" evidence="3">
    <location>
        <position position="72"/>
    </location>
</feature>
<feature type="glycosylation site" description="N-linked (GlcNAc...) asparagine" evidence="3">
    <location>
        <position position="108"/>
    </location>
</feature>
<feature type="disulfide bond" evidence="4">
    <location>
        <begin position="73"/>
        <end position="230"/>
    </location>
</feature>
<feature type="disulfide bond" evidence="4">
    <location>
        <begin position="164"/>
        <end position="384"/>
    </location>
</feature>
<feature type="disulfide bond" evidence="4">
    <location>
        <begin position="185"/>
        <end position="212"/>
    </location>
</feature>
<feature type="disulfide bond" evidence="4">
    <location>
        <begin position="393"/>
        <end position="425"/>
    </location>
</feature>
<feature type="sequence conflict" description="In Ref. 1; AAO22165." evidence="5" ref="1">
    <original>N</original>
    <variation>S</variation>
    <location>
        <position position="72"/>
    </location>
</feature>
<feature type="sequence conflict" description="In Ref. 2; AAP76324/AAP76326." evidence="5" ref="2">
    <original>Y</original>
    <variation>S</variation>
    <location>
        <position position="263"/>
    </location>
</feature>
<reference key="1">
    <citation type="journal article" date="2003" name="J. Virol.">
        <title>The core 2 beta-1,6-N-acetylglucosaminyltransferase-mucin encoded by bovine herpesvirus 4 was acquired from an ancestor of the African buffalo.</title>
        <authorList>
            <person name="Markine-Goriaynoff N."/>
            <person name="Georgin J.-P."/>
            <person name="Goltz M."/>
            <person name="Zimmermann W."/>
            <person name="Broll H."/>
            <person name="Wamwayi H.M."/>
            <person name="Pastoret P.-P."/>
            <person name="Sharp P.M."/>
            <person name="Vanderplasschen A."/>
        </authorList>
    </citation>
    <scope>NUCLEOTIDE SEQUENCE [GENOMIC DNA]</scope>
</reference>
<reference key="2">
    <citation type="journal article" date="2004" name="Am. J. Respir. Cell Mol. Biol.">
        <title>Mucin biosynthesis: bovine C2GnT-M gene, tissue-specific expression, and herpes virus-4 homologue.</title>
        <authorList>
            <person name="Choi K.H."/>
            <person name="Osorio F.A."/>
            <person name="Cheng P.-W."/>
        </authorList>
    </citation>
    <scope>NUCLEOTIDE SEQUENCE [GENOMIC DNA / MRNA]</scope>
    <source>
        <tissue>Colon</tissue>
        <tissue>Tracheal epithelium</tissue>
    </source>
</reference>
<reference key="3">
    <citation type="journal article" date="2004" name="J. Biol. Chem.">
        <title>Identification of disulfide bonds among the nine core 2 N-acetylglucosaminyltransferase-M cysteines conserved in the mucin beta6-N-acetylglucosaminyltransferase family.</title>
        <authorList>
            <person name="Singh J."/>
            <person name="Khan G.A."/>
            <person name="Kinarsky L."/>
            <person name="Cheng H."/>
            <person name="Wilken J."/>
            <person name="Choi K.H."/>
            <person name="Bedows E."/>
            <person name="Sherman S."/>
            <person name="Cheng P.-W."/>
        </authorList>
    </citation>
    <scope>PARTIAL PROTEIN SEQUENCE</scope>
    <scope>DISULFIDE BONDS</scope>
    <scope>GLYCOSYLATION</scope>
</reference>
<proteinExistence type="evidence at protein level"/>